<feature type="chain" id="PRO_0000329601" description="Polyribonucleotide nucleotidyltransferase">
    <location>
        <begin position="1"/>
        <end position="702"/>
    </location>
</feature>
<feature type="domain" description="KH" evidence="1">
    <location>
        <begin position="552"/>
        <end position="611"/>
    </location>
</feature>
<feature type="domain" description="S1 motif" evidence="1">
    <location>
        <begin position="621"/>
        <end position="689"/>
    </location>
</feature>
<feature type="binding site" evidence="1">
    <location>
        <position position="485"/>
    </location>
    <ligand>
        <name>Mg(2+)</name>
        <dbReference type="ChEBI" id="CHEBI:18420"/>
    </ligand>
</feature>
<feature type="binding site" evidence="1">
    <location>
        <position position="491"/>
    </location>
    <ligand>
        <name>Mg(2+)</name>
        <dbReference type="ChEBI" id="CHEBI:18420"/>
    </ligand>
</feature>
<name>PNP_CLOP1</name>
<proteinExistence type="inferred from homology"/>
<keyword id="KW-0963">Cytoplasm</keyword>
<keyword id="KW-0460">Magnesium</keyword>
<keyword id="KW-0479">Metal-binding</keyword>
<keyword id="KW-0548">Nucleotidyltransferase</keyword>
<keyword id="KW-0694">RNA-binding</keyword>
<keyword id="KW-0808">Transferase</keyword>
<protein>
    <recommendedName>
        <fullName evidence="1">Polyribonucleotide nucleotidyltransferase</fullName>
        <ecNumber evidence="1">2.7.7.8</ecNumber>
    </recommendedName>
    <alternativeName>
        <fullName evidence="1">Polynucleotide phosphorylase</fullName>
        <shortName evidence="1">PNPase</shortName>
    </alternativeName>
</protein>
<sequence>MNHTHETIIAGRPMKVEFGKLGMLSDAAILMSYGDTVILTNVNASEKPREGIDFFPLSVEYEERLYSVGKIPGGFIKREGKPSEKAILNGRAIDRPLRPLFPKGYRNDVQVVCTVVSVENDNLPEILAINAASMALCLSSIPFTTPVAAVQVGLIGEEFILNPTSKEREESSLQLTVCATKERVMMIEAGGDEIPEDTMINAIKFGFDKCQDIIKFQEEAVSMFGKEKKVPELHKVPEEIEEAVREFAFDMISESMHITDRDERNAAMDEVKAKINEEFEEKYPDNMSDIGEAVYDMQKEVVRHMLLKEGKRPDGRAFDEVRNIGCEVGLLPRTHGTGLFTRGLTQVMTVATLGSISEIQILDGIGEEESKRYMHHYNFPAYSVGEVRPLRGPGRREIGHGALAERALEPLIPSEAKFPYTIRLVSEVLSSNGSTSQASVCGSTLALLDAGVPIKRPAAGIAMGLITSKDLTEEEVLTDIQGLEDFFGDMDFKVAGTEEGITSIQVDTKIKGLSEKVIHDAIYGARKARLMILDKIKECIPAPREEVSKYAPKTSTLQIDPEKIRDVIGAGGKVINKIIADTGVKIDIKEDGLVYVSSAESEGVKEAVKIIEGLTKEVKAGEIYLGKVTKIAQFGAFVEVLPNKEGLVHISKLDNKRVEKVEDVVSVGDEILVKVTEIDSQGRINLSRKDAIKEAEEENKQQ</sequence>
<accession>Q0TPS3</accession>
<gene>
    <name evidence="1" type="primary">pnp</name>
    <name type="ordered locus">CPF_1934</name>
</gene>
<evidence type="ECO:0000255" key="1">
    <source>
        <dbReference type="HAMAP-Rule" id="MF_01595"/>
    </source>
</evidence>
<comment type="function">
    <text evidence="1">Involved in mRNA degradation. Catalyzes the phosphorolysis of single-stranded polyribonucleotides processively in the 3'- to 5'-direction.</text>
</comment>
<comment type="catalytic activity">
    <reaction evidence="1">
        <text>RNA(n+1) + phosphate = RNA(n) + a ribonucleoside 5'-diphosphate</text>
        <dbReference type="Rhea" id="RHEA:22096"/>
        <dbReference type="Rhea" id="RHEA-COMP:14527"/>
        <dbReference type="Rhea" id="RHEA-COMP:17342"/>
        <dbReference type="ChEBI" id="CHEBI:43474"/>
        <dbReference type="ChEBI" id="CHEBI:57930"/>
        <dbReference type="ChEBI" id="CHEBI:140395"/>
        <dbReference type="EC" id="2.7.7.8"/>
    </reaction>
</comment>
<comment type="cofactor">
    <cofactor evidence="1">
        <name>Mg(2+)</name>
        <dbReference type="ChEBI" id="CHEBI:18420"/>
    </cofactor>
</comment>
<comment type="subcellular location">
    <subcellularLocation>
        <location evidence="1">Cytoplasm</location>
    </subcellularLocation>
</comment>
<comment type="similarity">
    <text evidence="1">Belongs to the polyribonucleotide nucleotidyltransferase family.</text>
</comment>
<organism>
    <name type="scientific">Clostridium perfringens (strain ATCC 13124 / DSM 756 / JCM 1290 / NCIMB 6125 / NCTC 8237 / Type A)</name>
    <dbReference type="NCBI Taxonomy" id="195103"/>
    <lineage>
        <taxon>Bacteria</taxon>
        <taxon>Bacillati</taxon>
        <taxon>Bacillota</taxon>
        <taxon>Clostridia</taxon>
        <taxon>Eubacteriales</taxon>
        <taxon>Clostridiaceae</taxon>
        <taxon>Clostridium</taxon>
    </lineage>
</organism>
<reference key="1">
    <citation type="journal article" date="2006" name="Genome Res.">
        <title>Skewed genomic variability in strains of the toxigenic bacterial pathogen, Clostridium perfringens.</title>
        <authorList>
            <person name="Myers G.S.A."/>
            <person name="Rasko D.A."/>
            <person name="Cheung J.K."/>
            <person name="Ravel J."/>
            <person name="Seshadri R."/>
            <person name="DeBoy R.T."/>
            <person name="Ren Q."/>
            <person name="Varga J."/>
            <person name="Awad M.M."/>
            <person name="Brinkac L.M."/>
            <person name="Daugherty S.C."/>
            <person name="Haft D.H."/>
            <person name="Dodson R.J."/>
            <person name="Madupu R."/>
            <person name="Nelson W.C."/>
            <person name="Rosovitz M.J."/>
            <person name="Sullivan S.A."/>
            <person name="Khouri H."/>
            <person name="Dimitrov G.I."/>
            <person name="Watkins K.L."/>
            <person name="Mulligan S."/>
            <person name="Benton J."/>
            <person name="Radune D."/>
            <person name="Fisher D.J."/>
            <person name="Atkins H.S."/>
            <person name="Hiscox T."/>
            <person name="Jost B.H."/>
            <person name="Billington S.J."/>
            <person name="Songer J.G."/>
            <person name="McClane B.A."/>
            <person name="Titball R.W."/>
            <person name="Rood J.I."/>
            <person name="Melville S.B."/>
            <person name="Paulsen I.T."/>
        </authorList>
    </citation>
    <scope>NUCLEOTIDE SEQUENCE [LARGE SCALE GENOMIC DNA]</scope>
    <source>
        <strain>ATCC 13124 / DSM 756 / JCM 1290 / NCIMB 6125 / NCTC 8237 / S 107 / Type A</strain>
    </source>
</reference>
<dbReference type="EC" id="2.7.7.8" evidence="1"/>
<dbReference type="EMBL" id="CP000246">
    <property type="protein sequence ID" value="ABG83292.1"/>
    <property type="molecule type" value="Genomic_DNA"/>
</dbReference>
<dbReference type="RefSeq" id="WP_003459742.1">
    <property type="nucleotide sequence ID" value="NC_008261.1"/>
</dbReference>
<dbReference type="SMR" id="Q0TPS3"/>
<dbReference type="STRING" id="195103.CPF_1934"/>
<dbReference type="PaxDb" id="195103-CPF_1934"/>
<dbReference type="KEGG" id="cpf:CPF_1934"/>
<dbReference type="eggNOG" id="COG1185">
    <property type="taxonomic scope" value="Bacteria"/>
</dbReference>
<dbReference type="HOGENOM" id="CLU_004217_2_2_9"/>
<dbReference type="Proteomes" id="UP000001823">
    <property type="component" value="Chromosome"/>
</dbReference>
<dbReference type="GO" id="GO:0005829">
    <property type="term" value="C:cytosol"/>
    <property type="evidence" value="ECO:0007669"/>
    <property type="project" value="TreeGrafter"/>
</dbReference>
<dbReference type="GO" id="GO:0000175">
    <property type="term" value="F:3'-5'-RNA exonuclease activity"/>
    <property type="evidence" value="ECO:0007669"/>
    <property type="project" value="TreeGrafter"/>
</dbReference>
<dbReference type="GO" id="GO:0000287">
    <property type="term" value="F:magnesium ion binding"/>
    <property type="evidence" value="ECO:0007669"/>
    <property type="project" value="UniProtKB-UniRule"/>
</dbReference>
<dbReference type="GO" id="GO:0004654">
    <property type="term" value="F:polyribonucleotide nucleotidyltransferase activity"/>
    <property type="evidence" value="ECO:0007669"/>
    <property type="project" value="UniProtKB-UniRule"/>
</dbReference>
<dbReference type="GO" id="GO:0003723">
    <property type="term" value="F:RNA binding"/>
    <property type="evidence" value="ECO:0007669"/>
    <property type="project" value="UniProtKB-UniRule"/>
</dbReference>
<dbReference type="GO" id="GO:0006402">
    <property type="term" value="P:mRNA catabolic process"/>
    <property type="evidence" value="ECO:0007669"/>
    <property type="project" value="UniProtKB-UniRule"/>
</dbReference>
<dbReference type="GO" id="GO:0006396">
    <property type="term" value="P:RNA processing"/>
    <property type="evidence" value="ECO:0007669"/>
    <property type="project" value="InterPro"/>
</dbReference>
<dbReference type="CDD" id="cd02393">
    <property type="entry name" value="KH-I_PNPase"/>
    <property type="match status" value="1"/>
</dbReference>
<dbReference type="CDD" id="cd11363">
    <property type="entry name" value="RNase_PH_PNPase_1"/>
    <property type="match status" value="1"/>
</dbReference>
<dbReference type="CDD" id="cd11364">
    <property type="entry name" value="RNase_PH_PNPase_2"/>
    <property type="match status" value="1"/>
</dbReference>
<dbReference type="CDD" id="cd04472">
    <property type="entry name" value="S1_PNPase"/>
    <property type="match status" value="1"/>
</dbReference>
<dbReference type="FunFam" id="2.40.50.140:FF:000023">
    <property type="entry name" value="Polyribonucleotide nucleotidyltransferase"/>
    <property type="match status" value="1"/>
</dbReference>
<dbReference type="FunFam" id="3.30.1370.10:FF:000001">
    <property type="entry name" value="Polyribonucleotide nucleotidyltransferase"/>
    <property type="match status" value="1"/>
</dbReference>
<dbReference type="FunFam" id="3.30.230.70:FF:000001">
    <property type="entry name" value="Polyribonucleotide nucleotidyltransferase"/>
    <property type="match status" value="1"/>
</dbReference>
<dbReference type="FunFam" id="3.30.230.70:FF:000002">
    <property type="entry name" value="Polyribonucleotide nucleotidyltransferase"/>
    <property type="match status" value="1"/>
</dbReference>
<dbReference type="Gene3D" id="3.30.230.70">
    <property type="entry name" value="GHMP Kinase, N-terminal domain"/>
    <property type="match status" value="2"/>
</dbReference>
<dbReference type="Gene3D" id="3.30.1370.10">
    <property type="entry name" value="K Homology domain, type 1"/>
    <property type="match status" value="1"/>
</dbReference>
<dbReference type="Gene3D" id="2.40.50.140">
    <property type="entry name" value="Nucleic acid-binding proteins"/>
    <property type="match status" value="1"/>
</dbReference>
<dbReference type="HAMAP" id="MF_01595">
    <property type="entry name" value="PNPase"/>
    <property type="match status" value="1"/>
</dbReference>
<dbReference type="InterPro" id="IPR001247">
    <property type="entry name" value="ExoRNase_PH_dom1"/>
</dbReference>
<dbReference type="InterPro" id="IPR015847">
    <property type="entry name" value="ExoRNase_PH_dom2"/>
</dbReference>
<dbReference type="InterPro" id="IPR036345">
    <property type="entry name" value="ExoRNase_PH_dom2_sf"/>
</dbReference>
<dbReference type="InterPro" id="IPR004087">
    <property type="entry name" value="KH_dom"/>
</dbReference>
<dbReference type="InterPro" id="IPR004088">
    <property type="entry name" value="KH_dom_type_1"/>
</dbReference>
<dbReference type="InterPro" id="IPR036612">
    <property type="entry name" value="KH_dom_type_1_sf"/>
</dbReference>
<dbReference type="InterPro" id="IPR012340">
    <property type="entry name" value="NA-bd_OB-fold"/>
</dbReference>
<dbReference type="InterPro" id="IPR012162">
    <property type="entry name" value="PNPase"/>
</dbReference>
<dbReference type="InterPro" id="IPR027408">
    <property type="entry name" value="PNPase/RNase_PH_dom_sf"/>
</dbReference>
<dbReference type="InterPro" id="IPR015848">
    <property type="entry name" value="PNPase_PH_RNA-bd_bac/org-type"/>
</dbReference>
<dbReference type="InterPro" id="IPR020568">
    <property type="entry name" value="Ribosomal_Su5_D2-typ_SF"/>
</dbReference>
<dbReference type="InterPro" id="IPR003029">
    <property type="entry name" value="S1_domain"/>
</dbReference>
<dbReference type="NCBIfam" id="TIGR03591">
    <property type="entry name" value="polynuc_phos"/>
    <property type="match status" value="1"/>
</dbReference>
<dbReference type="NCBIfam" id="NF008805">
    <property type="entry name" value="PRK11824.1"/>
    <property type="match status" value="1"/>
</dbReference>
<dbReference type="PANTHER" id="PTHR11252">
    <property type="entry name" value="POLYRIBONUCLEOTIDE NUCLEOTIDYLTRANSFERASE"/>
    <property type="match status" value="1"/>
</dbReference>
<dbReference type="PANTHER" id="PTHR11252:SF0">
    <property type="entry name" value="POLYRIBONUCLEOTIDE NUCLEOTIDYLTRANSFERASE 1, MITOCHONDRIAL"/>
    <property type="match status" value="1"/>
</dbReference>
<dbReference type="Pfam" id="PF00013">
    <property type="entry name" value="KH_1"/>
    <property type="match status" value="1"/>
</dbReference>
<dbReference type="Pfam" id="PF03726">
    <property type="entry name" value="PNPase"/>
    <property type="match status" value="1"/>
</dbReference>
<dbReference type="Pfam" id="PF01138">
    <property type="entry name" value="RNase_PH"/>
    <property type="match status" value="2"/>
</dbReference>
<dbReference type="Pfam" id="PF03725">
    <property type="entry name" value="RNase_PH_C"/>
    <property type="match status" value="1"/>
</dbReference>
<dbReference type="Pfam" id="PF00575">
    <property type="entry name" value="S1"/>
    <property type="match status" value="1"/>
</dbReference>
<dbReference type="PIRSF" id="PIRSF005499">
    <property type="entry name" value="PNPase"/>
    <property type="match status" value="1"/>
</dbReference>
<dbReference type="SMART" id="SM00322">
    <property type="entry name" value="KH"/>
    <property type="match status" value="1"/>
</dbReference>
<dbReference type="SMART" id="SM00316">
    <property type="entry name" value="S1"/>
    <property type="match status" value="1"/>
</dbReference>
<dbReference type="SUPFAM" id="SSF54791">
    <property type="entry name" value="Eukaryotic type KH-domain (KH-domain type I)"/>
    <property type="match status" value="1"/>
</dbReference>
<dbReference type="SUPFAM" id="SSF50249">
    <property type="entry name" value="Nucleic acid-binding proteins"/>
    <property type="match status" value="1"/>
</dbReference>
<dbReference type="SUPFAM" id="SSF55666">
    <property type="entry name" value="Ribonuclease PH domain 2-like"/>
    <property type="match status" value="2"/>
</dbReference>
<dbReference type="SUPFAM" id="SSF54211">
    <property type="entry name" value="Ribosomal protein S5 domain 2-like"/>
    <property type="match status" value="2"/>
</dbReference>
<dbReference type="PROSITE" id="PS50084">
    <property type="entry name" value="KH_TYPE_1"/>
    <property type="match status" value="1"/>
</dbReference>
<dbReference type="PROSITE" id="PS50126">
    <property type="entry name" value="S1"/>
    <property type="match status" value="1"/>
</dbReference>